<protein>
    <recommendedName>
        <fullName evidence="1">Flap endonuclease 1</fullName>
        <shortName evidence="1">FEN-1</shortName>
        <ecNumber evidence="1">3.1.-.-</ecNumber>
    </recommendedName>
    <alternativeName>
        <fullName evidence="1">Flap structure-specific endonuclease 1</fullName>
    </alternativeName>
</protein>
<accession>Q0UZR3</accession>
<dbReference type="EC" id="3.1.-.-" evidence="1"/>
<dbReference type="EMBL" id="CH445328">
    <property type="protein sequence ID" value="EAT89482.2"/>
    <property type="status" value="ALT_SEQ"/>
    <property type="molecule type" value="Genomic_DNA"/>
</dbReference>
<dbReference type="RefSeq" id="XP_001793348.1">
    <property type="nucleotide sequence ID" value="XM_001793296.1"/>
</dbReference>
<dbReference type="SMR" id="Q0UZR3"/>
<dbReference type="FunCoup" id="Q0UZR3">
    <property type="interactions" value="986"/>
</dbReference>
<dbReference type="STRING" id="321614.Q0UZR3"/>
<dbReference type="GeneID" id="5970205"/>
<dbReference type="KEGG" id="pno:SNOG_02751"/>
<dbReference type="VEuPathDB" id="FungiDB:JI435_027510"/>
<dbReference type="eggNOG" id="KOG2519">
    <property type="taxonomic scope" value="Eukaryota"/>
</dbReference>
<dbReference type="InParanoid" id="Q0UZR3"/>
<dbReference type="Proteomes" id="UP000001055">
    <property type="component" value="Unassembled WGS sequence"/>
</dbReference>
<dbReference type="GO" id="GO:0005737">
    <property type="term" value="C:cytoplasm"/>
    <property type="evidence" value="ECO:0000318"/>
    <property type="project" value="GO_Central"/>
</dbReference>
<dbReference type="GO" id="GO:0005739">
    <property type="term" value="C:mitochondrion"/>
    <property type="evidence" value="ECO:0007669"/>
    <property type="project" value="UniProtKB-SubCell"/>
</dbReference>
<dbReference type="GO" id="GO:0005730">
    <property type="term" value="C:nucleolus"/>
    <property type="evidence" value="ECO:0007669"/>
    <property type="project" value="UniProtKB-SubCell"/>
</dbReference>
<dbReference type="GO" id="GO:0005654">
    <property type="term" value="C:nucleoplasm"/>
    <property type="evidence" value="ECO:0007669"/>
    <property type="project" value="UniProtKB-SubCell"/>
</dbReference>
<dbReference type="GO" id="GO:0005634">
    <property type="term" value="C:nucleus"/>
    <property type="evidence" value="ECO:0000318"/>
    <property type="project" value="GO_Central"/>
</dbReference>
<dbReference type="GO" id="GO:0008409">
    <property type="term" value="F:5'-3' exonuclease activity"/>
    <property type="evidence" value="ECO:0000318"/>
    <property type="project" value="GO_Central"/>
</dbReference>
<dbReference type="GO" id="GO:0017108">
    <property type="term" value="F:5'-flap endonuclease activity"/>
    <property type="evidence" value="ECO:0000318"/>
    <property type="project" value="GO_Central"/>
</dbReference>
<dbReference type="GO" id="GO:0003677">
    <property type="term" value="F:DNA binding"/>
    <property type="evidence" value="ECO:0007669"/>
    <property type="project" value="UniProtKB-UniRule"/>
</dbReference>
<dbReference type="GO" id="GO:0000287">
    <property type="term" value="F:magnesium ion binding"/>
    <property type="evidence" value="ECO:0007669"/>
    <property type="project" value="UniProtKB-UniRule"/>
</dbReference>
<dbReference type="GO" id="GO:0006284">
    <property type="term" value="P:base-excision repair"/>
    <property type="evidence" value="ECO:0007669"/>
    <property type="project" value="UniProtKB-UniRule"/>
</dbReference>
<dbReference type="GO" id="GO:0043137">
    <property type="term" value="P:DNA replication, removal of RNA primer"/>
    <property type="evidence" value="ECO:0007669"/>
    <property type="project" value="UniProtKB-UniRule"/>
</dbReference>
<dbReference type="CDD" id="cd09907">
    <property type="entry name" value="H3TH_FEN1-Euk"/>
    <property type="match status" value="1"/>
</dbReference>
<dbReference type="CDD" id="cd09867">
    <property type="entry name" value="PIN_FEN1"/>
    <property type="match status" value="1"/>
</dbReference>
<dbReference type="FunFam" id="1.10.150.20:FF:000009">
    <property type="entry name" value="Flap endonuclease 1"/>
    <property type="match status" value="1"/>
</dbReference>
<dbReference type="FunFam" id="3.40.50.1010:FF:000003">
    <property type="entry name" value="Flap endonuclease 1"/>
    <property type="match status" value="1"/>
</dbReference>
<dbReference type="Gene3D" id="1.10.150.20">
    <property type="entry name" value="5' to 3' exonuclease, C-terminal subdomain"/>
    <property type="match status" value="1"/>
</dbReference>
<dbReference type="Gene3D" id="3.40.50.1010">
    <property type="entry name" value="5'-nuclease"/>
    <property type="match status" value="1"/>
</dbReference>
<dbReference type="HAMAP" id="MF_00614">
    <property type="entry name" value="Fen"/>
    <property type="match status" value="1"/>
</dbReference>
<dbReference type="InterPro" id="IPR036279">
    <property type="entry name" value="5-3_exonuclease_C_sf"/>
</dbReference>
<dbReference type="InterPro" id="IPR023426">
    <property type="entry name" value="Flap_endonuc"/>
</dbReference>
<dbReference type="InterPro" id="IPR008918">
    <property type="entry name" value="HhH2"/>
</dbReference>
<dbReference type="InterPro" id="IPR029060">
    <property type="entry name" value="PIN-like_dom_sf"/>
</dbReference>
<dbReference type="InterPro" id="IPR006086">
    <property type="entry name" value="XPG-I_dom"/>
</dbReference>
<dbReference type="InterPro" id="IPR006084">
    <property type="entry name" value="XPG/Rad2"/>
</dbReference>
<dbReference type="InterPro" id="IPR019974">
    <property type="entry name" value="XPG_CS"/>
</dbReference>
<dbReference type="InterPro" id="IPR006085">
    <property type="entry name" value="XPG_DNA_repair_N"/>
</dbReference>
<dbReference type="PANTHER" id="PTHR11081:SF9">
    <property type="entry name" value="FLAP ENDONUCLEASE 1"/>
    <property type="match status" value="1"/>
</dbReference>
<dbReference type="PANTHER" id="PTHR11081">
    <property type="entry name" value="FLAP ENDONUCLEASE FAMILY MEMBER"/>
    <property type="match status" value="1"/>
</dbReference>
<dbReference type="Pfam" id="PF00867">
    <property type="entry name" value="XPG_I"/>
    <property type="match status" value="1"/>
</dbReference>
<dbReference type="Pfam" id="PF00752">
    <property type="entry name" value="XPG_N"/>
    <property type="match status" value="1"/>
</dbReference>
<dbReference type="PRINTS" id="PR00853">
    <property type="entry name" value="XPGRADSUPER"/>
</dbReference>
<dbReference type="SMART" id="SM00279">
    <property type="entry name" value="HhH2"/>
    <property type="match status" value="1"/>
</dbReference>
<dbReference type="SMART" id="SM00484">
    <property type="entry name" value="XPGI"/>
    <property type="match status" value="1"/>
</dbReference>
<dbReference type="SMART" id="SM00485">
    <property type="entry name" value="XPGN"/>
    <property type="match status" value="1"/>
</dbReference>
<dbReference type="SUPFAM" id="SSF47807">
    <property type="entry name" value="5' to 3' exonuclease, C-terminal subdomain"/>
    <property type="match status" value="1"/>
</dbReference>
<dbReference type="SUPFAM" id="SSF88723">
    <property type="entry name" value="PIN domain-like"/>
    <property type="match status" value="1"/>
</dbReference>
<dbReference type="PROSITE" id="PS00841">
    <property type="entry name" value="XPG_1"/>
    <property type="match status" value="1"/>
</dbReference>
<dbReference type="PROSITE" id="PS00842">
    <property type="entry name" value="XPG_2"/>
    <property type="match status" value="1"/>
</dbReference>
<name>FEN1_PHANO</name>
<evidence type="ECO:0000255" key="1">
    <source>
        <dbReference type="HAMAP-Rule" id="MF_03140"/>
    </source>
</evidence>
<evidence type="ECO:0000256" key="2">
    <source>
        <dbReference type="SAM" id="MobiDB-lite"/>
    </source>
</evidence>
<evidence type="ECO:0000305" key="3"/>
<proteinExistence type="inferred from homology"/>
<gene>
    <name evidence="1" type="primary">FEN1</name>
    <name type="ORF">SNOG_02751</name>
</gene>
<reference key="1">
    <citation type="journal article" date="2007" name="Plant Cell">
        <title>Dothideomycete-plant interactions illuminated by genome sequencing and EST analysis of the wheat pathogen Stagonospora nodorum.</title>
        <authorList>
            <person name="Hane J.K."/>
            <person name="Lowe R.G.T."/>
            <person name="Solomon P.S."/>
            <person name="Tan K.-C."/>
            <person name="Schoch C.L."/>
            <person name="Spatafora J.W."/>
            <person name="Crous P.W."/>
            <person name="Kodira C.D."/>
            <person name="Birren B.W."/>
            <person name="Galagan J.E."/>
            <person name="Torriani S.F.F."/>
            <person name="McDonald B.A."/>
            <person name="Oliver R.P."/>
        </authorList>
    </citation>
    <scope>NUCLEOTIDE SEQUENCE [LARGE SCALE GENOMIC DNA]</scope>
    <source>
        <strain>SN15 / ATCC MYA-4574 / FGSC 10173</strain>
    </source>
</reference>
<keyword id="KW-0227">DNA damage</keyword>
<keyword id="KW-0234">DNA repair</keyword>
<keyword id="KW-0235">DNA replication</keyword>
<keyword id="KW-0255">Endonuclease</keyword>
<keyword id="KW-0269">Exonuclease</keyword>
<keyword id="KW-0378">Hydrolase</keyword>
<keyword id="KW-0460">Magnesium</keyword>
<keyword id="KW-0479">Metal-binding</keyword>
<keyword id="KW-0496">Mitochondrion</keyword>
<keyword id="KW-0540">Nuclease</keyword>
<keyword id="KW-0539">Nucleus</keyword>
<keyword id="KW-0597">Phosphoprotein</keyword>
<feature type="chain" id="PRO_0000403591" description="Flap endonuclease 1">
    <location>
        <begin position="1"/>
        <end position="396"/>
    </location>
</feature>
<feature type="region of interest" description="N-domain">
    <location>
        <begin position="1"/>
        <end position="104"/>
    </location>
</feature>
<feature type="region of interest" description="I-domain">
    <location>
        <begin position="122"/>
        <end position="255"/>
    </location>
</feature>
<feature type="region of interest" description="Disordered" evidence="2">
    <location>
        <begin position="338"/>
        <end position="396"/>
    </location>
</feature>
<feature type="region of interest" description="Interaction with PCNA" evidence="1">
    <location>
        <begin position="342"/>
        <end position="350"/>
    </location>
</feature>
<feature type="compositionally biased region" description="Basic and acidic residues" evidence="2">
    <location>
        <begin position="352"/>
        <end position="384"/>
    </location>
</feature>
<feature type="compositionally biased region" description="Basic residues" evidence="2">
    <location>
        <begin position="385"/>
        <end position="396"/>
    </location>
</feature>
<feature type="binding site" evidence="1">
    <location>
        <position position="34"/>
    </location>
    <ligand>
        <name>Mg(2+)</name>
        <dbReference type="ChEBI" id="CHEBI:18420"/>
        <label>1</label>
    </ligand>
</feature>
<feature type="binding site" evidence="1">
    <location>
        <position position="47"/>
    </location>
    <ligand>
        <name>DNA</name>
        <dbReference type="ChEBI" id="CHEBI:16991"/>
    </ligand>
</feature>
<feature type="binding site" evidence="1">
    <location>
        <position position="70"/>
    </location>
    <ligand>
        <name>DNA</name>
        <dbReference type="ChEBI" id="CHEBI:16991"/>
    </ligand>
</feature>
<feature type="binding site" evidence="1">
    <location>
        <position position="86"/>
    </location>
    <ligand>
        <name>Mg(2+)</name>
        <dbReference type="ChEBI" id="CHEBI:18420"/>
        <label>1</label>
    </ligand>
</feature>
<feature type="binding site" evidence="1">
    <location>
        <position position="158"/>
    </location>
    <ligand>
        <name>DNA</name>
        <dbReference type="ChEBI" id="CHEBI:16991"/>
    </ligand>
</feature>
<feature type="binding site" evidence="1">
    <location>
        <position position="158"/>
    </location>
    <ligand>
        <name>Mg(2+)</name>
        <dbReference type="ChEBI" id="CHEBI:18420"/>
        <label>1</label>
    </ligand>
</feature>
<feature type="binding site" evidence="1">
    <location>
        <position position="160"/>
    </location>
    <ligand>
        <name>Mg(2+)</name>
        <dbReference type="ChEBI" id="CHEBI:18420"/>
        <label>1</label>
    </ligand>
</feature>
<feature type="binding site" evidence="1">
    <location>
        <position position="179"/>
    </location>
    <ligand>
        <name>Mg(2+)</name>
        <dbReference type="ChEBI" id="CHEBI:18420"/>
        <label>2</label>
    </ligand>
</feature>
<feature type="binding site" evidence="1">
    <location>
        <position position="181"/>
    </location>
    <ligand>
        <name>Mg(2+)</name>
        <dbReference type="ChEBI" id="CHEBI:18420"/>
        <label>2</label>
    </ligand>
</feature>
<feature type="binding site" evidence="1">
    <location>
        <position position="233"/>
    </location>
    <ligand>
        <name>DNA</name>
        <dbReference type="ChEBI" id="CHEBI:16991"/>
    </ligand>
</feature>
<feature type="binding site" evidence="1">
    <location>
        <position position="235"/>
    </location>
    <ligand>
        <name>DNA</name>
        <dbReference type="ChEBI" id="CHEBI:16991"/>
    </ligand>
</feature>
<feature type="binding site" evidence="1">
    <location>
        <position position="235"/>
    </location>
    <ligand>
        <name>Mg(2+)</name>
        <dbReference type="ChEBI" id="CHEBI:18420"/>
        <label>2</label>
    </ligand>
</feature>
<comment type="function">
    <text evidence="1">Structure-specific nuclease with 5'-flap endonuclease and 5'-3' exonuclease activities involved in DNA replication and repair. During DNA replication, cleaves the 5'-overhanging flap structure that is generated by displacement synthesis when DNA polymerase encounters the 5'-end of a downstream Okazaki fragment. It enters the flap from the 5'-end and then tracks to cleave the flap base, leaving a nick for ligation. Also involved in the long patch base excision repair (LP-BER) pathway, by cleaving within the apurinic/apyrimidinic (AP) site-terminated flap. Acts as a genome stabilization factor that prevents flaps from equilibrating into structures that lead to duplications and deletions. Also possesses 5'-3' exonuclease activity on nicked or gapped double-stranded DNA, and exhibits RNase H activity. Also involved in replication and repair of rDNA and in repairing mitochondrial DNA.</text>
</comment>
<comment type="cofactor">
    <cofactor evidence="1">
        <name>Mg(2+)</name>
        <dbReference type="ChEBI" id="CHEBI:18420"/>
    </cofactor>
    <text evidence="1">Binds 2 magnesium ions per subunit. They probably participate in the reaction catalyzed by the enzyme. May bind an additional third magnesium ion after substrate binding.</text>
</comment>
<comment type="subunit">
    <text evidence="1">Interacts with PCNA. Three molecules of FEN1 bind to one PCNA trimer with each molecule binding to one PCNA monomer. PCNA stimulates the nuclease activity without altering cleavage specificity.</text>
</comment>
<comment type="subcellular location">
    <subcellularLocation>
        <location evidence="1">Nucleus</location>
        <location evidence="1">Nucleolus</location>
    </subcellularLocation>
    <subcellularLocation>
        <location evidence="1">Nucleus</location>
        <location evidence="1">Nucleoplasm</location>
    </subcellularLocation>
    <subcellularLocation>
        <location evidence="1">Mitochondrion</location>
    </subcellularLocation>
    <text evidence="1">Resides mostly in the nucleoli and relocalizes to the nucleoplasm upon DNA damage.</text>
</comment>
<comment type="PTM">
    <text evidence="1">Phosphorylated. Phosphorylation upon DNA damage induces relocalization to the nuclear plasma.</text>
</comment>
<comment type="similarity">
    <text evidence="1">Belongs to the XPG/RAD2 endonuclease family. FEN1 subfamily.</text>
</comment>
<comment type="sequence caution" evidence="3">
    <conflict type="erroneous gene model prediction">
        <sequence resource="EMBL-CDS" id="EAT89482"/>
    </conflict>
</comment>
<sequence>MGIKHLYQLIQEHSPDAIKTGEIKNQFGRKVAIDASMSIYSFLIAVRSDGQQLMSETGETTSHLMGLFYRTLRMVDNGIKPLYVFDGAPPKLKSGELAKRFQRKSEAHAAAEEAKETGTAEDVEKFSRRTVRVTREHNEECRRLLKLMGIPFIIAPTEAEAQCATLARGGKVYAAASEDMDTLTFNTPILLRHLTFSEQRKEPILEIHLDKVLEGLEMEREQPQFIDLCILLGCDYLDPIKGIGPSTALKLIRDHKTLEGVVAHIQSDQKKLTLPEDWPFADARQLFLEPDVCPADAPECDFKWEAPDIEGLVKFLVEEKHFNEDRVRNGAAKLQKNMKSAQQSRLEGFFKPVERTPEEKASLKRKADEKLSEKKKKQKEEAKAKKQAKSKPRTAG</sequence>
<organism>
    <name type="scientific">Phaeosphaeria nodorum (strain SN15 / ATCC MYA-4574 / FGSC 10173)</name>
    <name type="common">Glume blotch fungus</name>
    <name type="synonym">Parastagonospora nodorum</name>
    <dbReference type="NCBI Taxonomy" id="321614"/>
    <lineage>
        <taxon>Eukaryota</taxon>
        <taxon>Fungi</taxon>
        <taxon>Dikarya</taxon>
        <taxon>Ascomycota</taxon>
        <taxon>Pezizomycotina</taxon>
        <taxon>Dothideomycetes</taxon>
        <taxon>Pleosporomycetidae</taxon>
        <taxon>Pleosporales</taxon>
        <taxon>Pleosporineae</taxon>
        <taxon>Phaeosphaeriaceae</taxon>
        <taxon>Parastagonospora</taxon>
    </lineage>
</organism>